<evidence type="ECO:0000250" key="1"/>
<evidence type="ECO:0000250" key="2">
    <source>
        <dbReference type="UniProtKB" id="P04181"/>
    </source>
</evidence>
<evidence type="ECO:0000250" key="3">
    <source>
        <dbReference type="UniProtKB" id="P29758"/>
    </source>
</evidence>
<evidence type="ECO:0000269" key="4">
    <source>
    </source>
</evidence>
<evidence type="ECO:0000269" key="5">
    <source>
    </source>
</evidence>
<evidence type="ECO:0000305" key="6"/>
<protein>
    <recommendedName>
        <fullName>Ornithine aminotransferase, mitochondrial</fullName>
        <ecNumber evidence="2">2.6.1.13</ecNumber>
    </recommendedName>
    <alternativeName>
        <fullName>Ornithine--oxo-acid aminotransferase</fullName>
    </alternativeName>
</protein>
<gene>
    <name type="primary">Oat</name>
</gene>
<comment type="function">
    <text evidence="2">Catalyzes the reversible interconversion of L-ornithine and 2-oxoglutarate to L-glutamate semialdehyde and L-glutamate.</text>
</comment>
<comment type="catalytic activity">
    <reaction evidence="2">
        <text>L-ornithine + 2-oxoglutarate = L-glutamate 5-semialdehyde + L-glutamate</text>
        <dbReference type="Rhea" id="RHEA:25160"/>
        <dbReference type="ChEBI" id="CHEBI:16810"/>
        <dbReference type="ChEBI" id="CHEBI:29985"/>
        <dbReference type="ChEBI" id="CHEBI:46911"/>
        <dbReference type="ChEBI" id="CHEBI:58066"/>
        <dbReference type="EC" id="2.6.1.13"/>
    </reaction>
    <physiologicalReaction direction="left-to-right" evidence="2">
        <dbReference type="Rhea" id="RHEA:25161"/>
    </physiologicalReaction>
    <physiologicalReaction direction="right-to-left" evidence="2">
        <dbReference type="Rhea" id="RHEA:25162"/>
    </physiologicalReaction>
</comment>
<comment type="cofactor">
    <cofactor>
        <name>pyridoxal 5'-phosphate</name>
        <dbReference type="ChEBI" id="CHEBI:597326"/>
    </cofactor>
</comment>
<comment type="pathway">
    <text evidence="2">Amino-acid biosynthesis; L-proline biosynthesis; L-glutamate 5-semialdehyde from L-ornithine: step 1/1.</text>
</comment>
<comment type="subunit">
    <text evidence="2">Homohexamer.</text>
</comment>
<comment type="subcellular location">
    <subcellularLocation>
        <location evidence="2">Mitochondrion matrix</location>
    </subcellularLocation>
</comment>
<comment type="tissue specificity">
    <text evidence="4">Expressed in the head and flagellum of epididymal sperm but not in testicular sperm (at protein level).</text>
</comment>
<comment type="mass spectrometry"/>
<comment type="similarity">
    <text evidence="6">Belongs to the class-III pyridoxal-phosphate-dependent aminotransferase family.</text>
</comment>
<reference key="1">
    <citation type="journal article" date="1985" name="J. Biol. Chem.">
        <title>Sequence of the precursor to rat ornithine aminotransferase deduced from a cDNA clone.</title>
        <authorList>
            <person name="Mueckler M.M."/>
            <person name="Pitot H.C."/>
        </authorList>
    </citation>
    <scope>NUCLEOTIDE SEQUENCE [MRNA]</scope>
    <source>
        <tissue>Liver</tissue>
    </source>
</reference>
<reference key="2">
    <citation type="journal article" date="1988" name="J. Biol. Chem.">
        <title>Human ornithine-delta-aminotransferase. cDNA cloning and analysis of the structural gene.</title>
        <authorList>
            <person name="Mitchell G.A."/>
            <person name="Looney J.E."/>
            <person name="Brody L.C."/>
            <person name="Steel G."/>
            <person name="Suchanek M."/>
            <person name="Engelhardt J.F."/>
            <person name="Willard H.F."/>
            <person name="Valle D."/>
        </authorList>
    </citation>
    <scope>NUCLEOTIDE SEQUENCE [MRNA]</scope>
</reference>
<reference key="3">
    <citation type="journal article" date="1991" name="Gene">
        <title>The ornithine aminotransferase-encoding gene family of rat: cloning, characterization, and evolutionary relationships between a single expressed gene and three pseudogenes.</title>
        <authorList>
            <person name="Shull J.D."/>
            <person name="Pennington K.L."/>
            <person name="George S.M."/>
            <person name="Kilibarda K.A."/>
        </authorList>
    </citation>
    <scope>NUCLEOTIDE SEQUENCE [MRNA]</scope>
</reference>
<reference key="4">
    <citation type="journal article" date="2004" name="Genome Res.">
        <title>The status, quality, and expansion of the NIH full-length cDNA project: the Mammalian Gene Collection (MGC).</title>
        <authorList>
            <consortium name="The MGC Project Team"/>
        </authorList>
    </citation>
    <scope>NUCLEOTIDE SEQUENCE [LARGE SCALE MRNA]</scope>
    <source>
        <tissue>Pituitary</tissue>
    </source>
</reference>
<reference key="5">
    <citation type="journal article" date="1992" name="Biochim. Biophys. Acta">
        <title>Isolation and characterization of the rat gene encoding ornithine aminotransferase.</title>
        <authorList>
            <person name="Shull J.D."/>
            <person name="Pennington K.L."/>
            <person name="Pitot H.C."/>
            <person name="Boryca V.S."/>
            <person name="Schulte B.L."/>
        </authorList>
    </citation>
    <scope>NUCLEOTIDE SEQUENCE [GENOMIC DNA] OF 1-97 AND 217-439</scope>
    <source>
        <strain>Wistar Furth</strain>
        <tissue>Liver</tissue>
    </source>
</reference>
<reference key="6">
    <citation type="submission" date="2007-04" db="UniProtKB">
        <authorList>
            <person name="Lubec G."/>
            <person name="Afjehi-Sadat L."/>
            <person name="Chen W.-Q."/>
        </authorList>
    </citation>
    <scope>PROTEIN SEQUENCE OF 32-46; 275-292 AND 332-351</scope>
    <scope>IDENTIFICATION BY MASS SPECTROMETRY</scope>
    <source>
        <strain>Sprague-Dawley</strain>
        <tissue>Hippocampus</tissue>
        <tissue>Spinal cord</tissue>
    </source>
</reference>
<reference key="7">
    <citation type="journal article" date="1990" name="J. Biochem.">
        <title>Complete amino acid sequence of rat kidney ornithine aminotransferase: identity with liver ornithine aminotransferase.</title>
        <authorList>
            <person name="Oyama R."/>
            <person name="Suzuki M."/>
            <person name="Matsuzawa T."/>
            <person name="Titani K."/>
        </authorList>
    </citation>
    <scope>PROTEIN SEQUENCE OF 36-439</scope>
    <source>
        <tissue>Kidney</tissue>
    </source>
</reference>
<reference key="8">
    <citation type="journal article" date="2011" name="J. Androl.">
        <title>Differential proteomics leads to identification of domain specific epididymal sperm proteins.</title>
        <authorList>
            <person name="Suryawanshi A.R."/>
            <person name="Khan S.A."/>
            <person name="Gajbhiye R.K."/>
            <person name="Gurav M.Y."/>
            <person name="Khole V.V."/>
        </authorList>
    </citation>
    <scope>IDENTIFICATION BY MASS SPECTROMETRY</scope>
    <scope>TISSUE SPECIFICITY</scope>
    <scope>MASS SPECTROMETRY</scope>
    <source>
        <strain>Holtzman</strain>
        <tissue>Sperm</tissue>
    </source>
</reference>
<organism>
    <name type="scientific">Rattus norvegicus</name>
    <name type="common">Rat</name>
    <dbReference type="NCBI Taxonomy" id="10116"/>
    <lineage>
        <taxon>Eukaryota</taxon>
        <taxon>Metazoa</taxon>
        <taxon>Chordata</taxon>
        <taxon>Craniata</taxon>
        <taxon>Vertebrata</taxon>
        <taxon>Euteleostomi</taxon>
        <taxon>Mammalia</taxon>
        <taxon>Eutheria</taxon>
        <taxon>Euarchontoglires</taxon>
        <taxon>Glires</taxon>
        <taxon>Rodentia</taxon>
        <taxon>Myomorpha</taxon>
        <taxon>Muroidea</taxon>
        <taxon>Muridae</taxon>
        <taxon>Murinae</taxon>
        <taxon>Rattus</taxon>
    </lineage>
</organism>
<proteinExistence type="evidence at protein level"/>
<feature type="transit peptide" description="Mitochondrion" evidence="5">
    <location>
        <begin position="1"/>
        <end position="35"/>
    </location>
</feature>
<feature type="chain" id="PRO_0000001265" description="Ornithine aminotransferase, mitochondrial">
    <location>
        <begin position="36"/>
        <end position="439"/>
    </location>
</feature>
<feature type="modified residue" description="N6-acetyllysine" evidence="3">
    <location>
        <position position="49"/>
    </location>
</feature>
<feature type="modified residue" description="N6-acetyllysine" evidence="3">
    <location>
        <position position="66"/>
    </location>
</feature>
<feature type="modified residue" description="N6-succinyllysine" evidence="3">
    <location>
        <position position="102"/>
    </location>
</feature>
<feature type="modified residue" description="N6-acetyllysine; alternate" evidence="3">
    <location>
        <position position="107"/>
    </location>
</feature>
<feature type="modified residue" description="N6-succinyllysine; alternate" evidence="3">
    <location>
        <position position="107"/>
    </location>
</feature>
<feature type="modified residue" description="N6-(pyridoxal phosphate)lysine" evidence="1">
    <location>
        <position position="292"/>
    </location>
</feature>
<feature type="modified residue" description="N6-acetyllysine; alternate" evidence="3">
    <location>
        <position position="362"/>
    </location>
</feature>
<feature type="modified residue" description="N6-succinyllysine; alternate" evidence="3">
    <location>
        <position position="362"/>
    </location>
</feature>
<feature type="modified residue" description="N6-acetyllysine" evidence="3">
    <location>
        <position position="386"/>
    </location>
</feature>
<feature type="modified residue" description="N6-acetyllysine" evidence="3">
    <location>
        <position position="392"/>
    </location>
</feature>
<feature type="modified residue" description="N6-acetyllysine; alternate" evidence="3">
    <location>
        <position position="405"/>
    </location>
</feature>
<feature type="modified residue" description="N6-succinyllysine; alternate" evidence="3">
    <location>
        <position position="405"/>
    </location>
</feature>
<feature type="modified residue" description="N6-acetyllysine" evidence="3">
    <location>
        <position position="421"/>
    </location>
</feature>
<accession>P04182</accession>
<accession>Q6LDF6</accession>
<accession>Q6LDF7</accession>
<sequence>MLSKLASLQTVAALRRGLRTSVASATSVATKKTEQGPPSSEYIFERESKYGAHNYHPLPVALERGKGIYMWDVEGRQYFDFLSAYGAVSQGHCHPKIIEAMKSQVDKLTLTSRAFYNNVLGEYEEYITKLFNYNKVLPMNTGVEAGETACKLARRWGYTVKGIQKYKAKIVFAVGNFWGRTLSAVSSSTDPTSYDGFGPFMPGFETIPYNDLPALERALQDPNVAAFMVEPIQGEAGVIVPDPGYLTGVRELCTRHQVLFIADEIQTGLARTGRWLAVDHENVRPDIVLLGKALSGGLYPVSAVLCDDDIMLTIKPGEHGSTYGGNPLGCRIAIAALEVLEEEHLAENADKMGAILRKELMKLPSDVVTAVRGKGLLNAIVIRETKDCDAWKVCLRLRDNGLLAKPTHGDIIRLAPPLVIKEDEIRESVEIINKTILSF</sequence>
<keyword id="KW-0007">Acetylation</keyword>
<keyword id="KW-0032">Aminotransferase</keyword>
<keyword id="KW-0903">Direct protein sequencing</keyword>
<keyword id="KW-0496">Mitochondrion</keyword>
<keyword id="KW-0663">Pyridoxal phosphate</keyword>
<keyword id="KW-1185">Reference proteome</keyword>
<keyword id="KW-0808">Transferase</keyword>
<keyword id="KW-0809">Transit peptide</keyword>
<dbReference type="EC" id="2.6.1.13" evidence="2"/>
<dbReference type="EMBL" id="M11842">
    <property type="protein sequence ID" value="AAA41766.1"/>
    <property type="molecule type" value="mRNA"/>
</dbReference>
<dbReference type="EMBL" id="BC061551">
    <property type="protein sequence ID" value="AAH61551.1"/>
    <property type="molecule type" value="mRNA"/>
</dbReference>
<dbReference type="EMBL" id="M93296">
    <property type="protein sequence ID" value="AAA42060.1"/>
    <property type="molecule type" value="Genomic_DNA"/>
</dbReference>
<dbReference type="EMBL" id="M93295">
    <property type="protein sequence ID" value="AAA42060.1"/>
    <property type="status" value="JOINED"/>
    <property type="molecule type" value="Genomic_DNA"/>
</dbReference>
<dbReference type="EMBL" id="M93301">
    <property type="protein sequence ID" value="AAA42061.1"/>
    <property type="molecule type" value="Genomic_DNA"/>
</dbReference>
<dbReference type="EMBL" id="M93297">
    <property type="protein sequence ID" value="AAA42061.1"/>
    <property type="status" value="JOINED"/>
    <property type="molecule type" value="Genomic_DNA"/>
</dbReference>
<dbReference type="EMBL" id="M93298">
    <property type="protein sequence ID" value="AAA42061.1"/>
    <property type="status" value="JOINED"/>
    <property type="molecule type" value="Genomic_DNA"/>
</dbReference>
<dbReference type="EMBL" id="M93299">
    <property type="protein sequence ID" value="AAA42061.1"/>
    <property type="status" value="JOINED"/>
    <property type="molecule type" value="Genomic_DNA"/>
</dbReference>
<dbReference type="EMBL" id="M93300">
    <property type="protein sequence ID" value="AAA42061.1"/>
    <property type="status" value="JOINED"/>
    <property type="molecule type" value="Genomic_DNA"/>
</dbReference>
<dbReference type="PIR" id="A00600">
    <property type="entry name" value="XNRTO"/>
</dbReference>
<dbReference type="RefSeq" id="NP_071966.1">
    <property type="nucleotide sequence ID" value="NM_022521.3"/>
</dbReference>
<dbReference type="SMR" id="P04182"/>
<dbReference type="BioGRID" id="249025">
    <property type="interactions" value="2"/>
</dbReference>
<dbReference type="FunCoup" id="P04182">
    <property type="interactions" value="1776"/>
</dbReference>
<dbReference type="IntAct" id="P04182">
    <property type="interactions" value="1"/>
</dbReference>
<dbReference type="STRING" id="10116.ENSRNOP00000022628"/>
<dbReference type="iPTMnet" id="P04182"/>
<dbReference type="PhosphoSitePlus" id="P04182"/>
<dbReference type="jPOST" id="P04182"/>
<dbReference type="PaxDb" id="10116-ENSRNOP00000022628"/>
<dbReference type="Ensembl" id="ENSRNOT00000022628.6">
    <property type="protein sequence ID" value="ENSRNOP00000022628.3"/>
    <property type="gene ID" value="ENSRNOG00000016807.6"/>
</dbReference>
<dbReference type="GeneID" id="64313"/>
<dbReference type="KEGG" id="rno:64313"/>
<dbReference type="UCSC" id="RGD:621724">
    <property type="organism name" value="rat"/>
</dbReference>
<dbReference type="AGR" id="RGD:621724"/>
<dbReference type="CTD" id="4942"/>
<dbReference type="RGD" id="621724">
    <property type="gene designation" value="Oat"/>
</dbReference>
<dbReference type="eggNOG" id="KOG1402">
    <property type="taxonomic scope" value="Eukaryota"/>
</dbReference>
<dbReference type="GeneTree" id="ENSGT00630000089895"/>
<dbReference type="HOGENOM" id="CLU_016922_10_3_1"/>
<dbReference type="InParanoid" id="P04182"/>
<dbReference type="OMA" id="RSAWDLC"/>
<dbReference type="OrthoDB" id="425114at2759"/>
<dbReference type="PhylomeDB" id="P04182"/>
<dbReference type="TreeFam" id="TF105720"/>
<dbReference type="BRENDA" id="2.6.1.13">
    <property type="organism ID" value="5301"/>
</dbReference>
<dbReference type="Reactome" id="R-RNO-8964539">
    <property type="pathway name" value="Glutamate and glutamine metabolism"/>
</dbReference>
<dbReference type="SABIO-RK" id="P04182"/>
<dbReference type="UniPathway" id="UPA00098">
    <property type="reaction ID" value="UER00358"/>
</dbReference>
<dbReference type="PRO" id="PR:P04182"/>
<dbReference type="Proteomes" id="UP000002494">
    <property type="component" value="Chromosome 1"/>
</dbReference>
<dbReference type="Bgee" id="ENSRNOG00000016807">
    <property type="expression patterns" value="Expressed in jejunum and 20 other cell types or tissues"/>
</dbReference>
<dbReference type="GO" id="GO:0005737">
    <property type="term" value="C:cytoplasm"/>
    <property type="evidence" value="ECO:0000318"/>
    <property type="project" value="GO_Central"/>
</dbReference>
<dbReference type="GO" id="GO:0005759">
    <property type="term" value="C:mitochondrial matrix"/>
    <property type="evidence" value="ECO:0000250"/>
    <property type="project" value="UniProtKB"/>
</dbReference>
<dbReference type="GO" id="GO:0005654">
    <property type="term" value="C:nucleoplasm"/>
    <property type="evidence" value="ECO:0007669"/>
    <property type="project" value="Ensembl"/>
</dbReference>
<dbReference type="GO" id="GO:0042802">
    <property type="term" value="F:identical protein binding"/>
    <property type="evidence" value="ECO:0000250"/>
    <property type="project" value="UniProtKB"/>
</dbReference>
<dbReference type="GO" id="GO:0003992">
    <property type="term" value="F:N2-acetyl-L-ornithine:2-oxoglutarate 5-aminotransferase activity"/>
    <property type="evidence" value="ECO:0000304"/>
    <property type="project" value="RGD"/>
</dbReference>
<dbReference type="GO" id="GO:0004587">
    <property type="term" value="F:ornithine aminotransferase activity"/>
    <property type="evidence" value="ECO:0000250"/>
    <property type="project" value="UniProtKB"/>
</dbReference>
<dbReference type="GO" id="GO:0030170">
    <property type="term" value="F:pyridoxal phosphate binding"/>
    <property type="evidence" value="ECO:0000318"/>
    <property type="project" value="GO_Central"/>
</dbReference>
<dbReference type="GO" id="GO:0019544">
    <property type="term" value="P:arginine catabolic process to glutamate"/>
    <property type="evidence" value="ECO:0000318"/>
    <property type="project" value="GO_Central"/>
</dbReference>
<dbReference type="GO" id="GO:0010121">
    <property type="term" value="P:arginine catabolic process to proline via ornithine"/>
    <property type="evidence" value="ECO:0000318"/>
    <property type="project" value="GO_Central"/>
</dbReference>
<dbReference type="GO" id="GO:0055129">
    <property type="term" value="P:L-proline biosynthetic process"/>
    <property type="evidence" value="ECO:0007669"/>
    <property type="project" value="UniProtKB-UniPathway"/>
</dbReference>
<dbReference type="GO" id="GO:0006591">
    <property type="term" value="P:ornithine metabolic process"/>
    <property type="evidence" value="ECO:0000304"/>
    <property type="project" value="RGD"/>
</dbReference>
<dbReference type="CDD" id="cd00610">
    <property type="entry name" value="OAT_like"/>
    <property type="match status" value="1"/>
</dbReference>
<dbReference type="FunFam" id="3.40.640.10:FF:000011">
    <property type="entry name" value="Ornithine aminotransferase"/>
    <property type="match status" value="1"/>
</dbReference>
<dbReference type="FunFam" id="3.90.1150.10:FF:000152">
    <property type="entry name" value="Ornithine aminotransferase"/>
    <property type="match status" value="1"/>
</dbReference>
<dbReference type="Gene3D" id="3.90.1150.10">
    <property type="entry name" value="Aspartate Aminotransferase, domain 1"/>
    <property type="match status" value="1"/>
</dbReference>
<dbReference type="Gene3D" id="3.40.640.10">
    <property type="entry name" value="Type I PLP-dependent aspartate aminotransferase-like (Major domain)"/>
    <property type="match status" value="1"/>
</dbReference>
<dbReference type="InterPro" id="IPR005814">
    <property type="entry name" value="Aminotrans_3"/>
</dbReference>
<dbReference type="InterPro" id="IPR049704">
    <property type="entry name" value="Aminotrans_3_PPA_site"/>
</dbReference>
<dbReference type="InterPro" id="IPR050103">
    <property type="entry name" value="Class-III_PLP-dep_AT"/>
</dbReference>
<dbReference type="InterPro" id="IPR010164">
    <property type="entry name" value="Orn_aminotrans"/>
</dbReference>
<dbReference type="InterPro" id="IPR015424">
    <property type="entry name" value="PyrdxlP-dep_Trfase"/>
</dbReference>
<dbReference type="InterPro" id="IPR015421">
    <property type="entry name" value="PyrdxlP-dep_Trfase_major"/>
</dbReference>
<dbReference type="InterPro" id="IPR015422">
    <property type="entry name" value="PyrdxlP-dep_Trfase_small"/>
</dbReference>
<dbReference type="NCBIfam" id="TIGR01885">
    <property type="entry name" value="Orn_aminotrans"/>
    <property type="match status" value="1"/>
</dbReference>
<dbReference type="PANTHER" id="PTHR11986">
    <property type="entry name" value="AMINOTRANSFERASE CLASS III"/>
    <property type="match status" value="1"/>
</dbReference>
<dbReference type="PANTHER" id="PTHR11986:SF18">
    <property type="entry name" value="ORNITHINE AMINOTRANSFERASE, MITOCHONDRIAL"/>
    <property type="match status" value="1"/>
</dbReference>
<dbReference type="Pfam" id="PF00202">
    <property type="entry name" value="Aminotran_3"/>
    <property type="match status" value="1"/>
</dbReference>
<dbReference type="PIRSF" id="PIRSF000521">
    <property type="entry name" value="Transaminase_4ab_Lys_Orn"/>
    <property type="match status" value="1"/>
</dbReference>
<dbReference type="SUPFAM" id="SSF53383">
    <property type="entry name" value="PLP-dependent transferases"/>
    <property type="match status" value="1"/>
</dbReference>
<dbReference type="PROSITE" id="PS00600">
    <property type="entry name" value="AA_TRANSFER_CLASS_3"/>
    <property type="match status" value="1"/>
</dbReference>
<name>OAT_RAT</name>